<reference key="1">
    <citation type="journal article" date="1996" name="Eur. J. Biochem.">
        <title>Temporins, antimicrobial peptides from the European red frog Rana temporaria.</title>
        <authorList>
            <person name="Simmaco M."/>
            <person name="Mignogna G."/>
            <person name="Canofeni S."/>
            <person name="Miele R."/>
            <person name="Mangoni M.L."/>
            <person name="Barra D."/>
        </authorList>
    </citation>
    <scope>PROTEIN SEQUENCE</scope>
    <scope>AMIDATION AT LEU-13</scope>
    <scope>SUBCELLULAR LOCATION</scope>
    <source>
        <tissue>Skin secretion</tissue>
    </source>
</reference>
<reference key="2">
    <citation type="journal article" date="2021" name="Anal. Bioanal. Chem.">
        <title>Differentiation of Central Slovenian and Moscow populations of Rana temporaria frogs using peptide biomarkers of temporins family.</title>
        <authorList>
            <person name="Samgina T.Y."/>
            <person name="Vasileva I.D."/>
            <person name="Kovalev S.V."/>
            <person name="Trebse P."/>
            <person name="Torkar G."/>
            <person name="Surin A.K."/>
            <person name="Zubarev R.A."/>
            <person name="Lebedev A.T."/>
        </authorList>
    </citation>
    <scope>PROTEIN SEQUENCE</scope>
    <scope>IDENTIFICATION BY MASS SPECTROMETRY</scope>
    <scope>SUBCELLULAR LOCATION</scope>
    <scope>AMIDATION AT LEU-13</scope>
    <source>
        <tissue evidence="6">Skin secretion</tissue>
    </source>
</reference>
<reference key="3">
    <citation type="journal article" date="2015" name="Molecules">
        <title>The role of phosphoglycans in the susceptibility of Leishmania mexicana to the temporin family of anti-microbial peptides.</title>
        <authorList>
            <person name="Eggimann G.A."/>
            <person name="Sweeney K."/>
            <person name="Bolt H.L."/>
            <person name="Rozatian N."/>
            <person name="Cobb S.L."/>
            <person name="Denny P.W."/>
        </authorList>
    </citation>
    <scope>FUNCTION</scope>
</reference>
<reference key="4">
    <citation type="journal article" date="2018" name="J. Pept. Sci.">
        <title>Assessment of the potential of temporin peptides from the frog Rana temporaria (Ranidae) as anti-diabetic agents.</title>
        <authorList>
            <person name="Musale V."/>
            <person name="Casciaro B."/>
            <person name="Mangoni M.L."/>
            <person name="Abdel-Wahab Y.H.A."/>
            <person name="Flatt P.R."/>
            <person name="Conlon J.M."/>
        </authorList>
    </citation>
    <scope>FUNCTION AS INSULINOTROPIC PEPTIDE</scope>
    <scope>BIOASSAY</scope>
</reference>
<sequence length="13" mass="1370">FLPLIGKVLSGIL</sequence>
<comment type="function">
    <text evidence="1 2 3">Amphipathic alpha-helical antimicrobial peptide with potent activity against Gram-positive bacteria, weak activity against Gram-negative bacteria, and moderate activity against fungi (By similarity). Also displays anti-leishmania activity by damaging parasite membrane (PubMed:25668079). Stimulates insulin release from pancreatic beta-cells in a dose-dependent manner, without increasing intracellular calcium (PubMed:29349894). Protects beta-cells against cytokine-induced apoptosis and augments beta-cells proliferation (PubMed:29349894). In vivo, intraperitoneal injection together with a glucose load into mice does not have effect on plasma glucose levels (PubMed:29349894).</text>
</comment>
<comment type="subcellular location">
    <subcellularLocation>
        <location evidence="4 5">Secreted</location>
    </subcellularLocation>
</comment>
<comment type="tissue specificity">
    <text evidence="9 10">Expressed by the skin glands.</text>
</comment>
<comment type="mass spectrometry" mass="1367.89" method="Electrospray" evidence="4"/>
<comment type="similarity">
    <text evidence="8">Belongs to the frog skin active peptide (FSAP) family. Temporin subfamily.</text>
</comment>
<comment type="online information" name="The antimicrobial peptide database">
    <link uri="https://wangapd3.com/database/query_output.php?ID=00098"/>
</comment>
<dbReference type="GO" id="GO:0005576">
    <property type="term" value="C:extracellular region"/>
    <property type="evidence" value="ECO:0000314"/>
    <property type="project" value="UniProtKB"/>
</dbReference>
<dbReference type="GO" id="GO:0042742">
    <property type="term" value="P:defense response to bacterium"/>
    <property type="evidence" value="ECO:0007669"/>
    <property type="project" value="UniProtKB-KW"/>
</dbReference>
<dbReference type="GO" id="GO:0045087">
    <property type="term" value="P:innate immune response"/>
    <property type="evidence" value="ECO:0007669"/>
    <property type="project" value="UniProtKB-KW"/>
</dbReference>
<name>TPF_RANTE</name>
<feature type="peptide" id="PRO_0000043583" description="Temporin-1Tf" evidence="5">
    <location>
        <begin position="1"/>
        <end position="13"/>
    </location>
</feature>
<feature type="modified residue" description="Leucine amide" evidence="5">
    <location>
        <position position="13"/>
    </location>
</feature>
<keyword id="KW-0027">Amidation</keyword>
<keyword id="KW-0878">Amphibian defense peptide</keyword>
<keyword id="KW-0044">Antibiotic</keyword>
<keyword id="KW-0929">Antimicrobial</keyword>
<keyword id="KW-0903">Direct protein sequencing</keyword>
<keyword id="KW-0391">Immunity</keyword>
<keyword id="KW-0399">Innate immunity</keyword>
<keyword id="KW-0964">Secreted</keyword>
<evidence type="ECO:0000250" key="1">
    <source>
        <dbReference type="UniProtKB" id="P56917"/>
    </source>
</evidence>
<evidence type="ECO:0000269" key="2">
    <source>
    </source>
</evidence>
<evidence type="ECO:0000269" key="3">
    <source>
    </source>
</evidence>
<evidence type="ECO:0000269" key="4">
    <source>
    </source>
</evidence>
<evidence type="ECO:0000269" key="5">
    <source>
    </source>
</evidence>
<evidence type="ECO:0000303" key="6">
    <source>
    </source>
</evidence>
<evidence type="ECO:0000303" key="7">
    <source>
    </source>
</evidence>
<evidence type="ECO:0000305" key="8"/>
<evidence type="ECO:0000305" key="9">
    <source>
    </source>
</evidence>
<evidence type="ECO:0000305" key="10">
    <source>
    </source>
</evidence>
<accession>P56921</accession>
<organism>
    <name type="scientific">Rana temporaria</name>
    <name type="common">European common frog</name>
    <dbReference type="NCBI Taxonomy" id="8407"/>
    <lineage>
        <taxon>Eukaryota</taxon>
        <taxon>Metazoa</taxon>
        <taxon>Chordata</taxon>
        <taxon>Craniata</taxon>
        <taxon>Vertebrata</taxon>
        <taxon>Euteleostomi</taxon>
        <taxon>Amphibia</taxon>
        <taxon>Batrachia</taxon>
        <taxon>Anura</taxon>
        <taxon>Neobatrachia</taxon>
        <taxon>Ranoidea</taxon>
        <taxon>Ranidae</taxon>
        <taxon>Rana</taxon>
        <taxon>Rana</taxon>
    </lineage>
</organism>
<protein>
    <recommendedName>
        <fullName evidence="1">Temporin-1Tf</fullName>
        <shortName evidence="1">TF</shortName>
    </recommendedName>
    <alternativeName>
        <fullName evidence="7">Temporin-F</fullName>
    </alternativeName>
</protein>
<proteinExistence type="evidence at protein level"/>